<dbReference type="EMBL" id="AE005174">
    <property type="protein sequence ID" value="AAG59167.1"/>
    <property type="status" value="ALT_INIT"/>
    <property type="molecule type" value="Genomic_DNA"/>
</dbReference>
<dbReference type="EMBL" id="BA000007">
    <property type="protein sequence ID" value="BAB38317.1"/>
    <property type="status" value="ALT_INIT"/>
    <property type="molecule type" value="Genomic_DNA"/>
</dbReference>
<dbReference type="PIR" id="C86088">
    <property type="entry name" value="C86088"/>
</dbReference>
<dbReference type="PIR" id="F65203">
    <property type="entry name" value="F65203"/>
</dbReference>
<dbReference type="PIR" id="F91240">
    <property type="entry name" value="F91240"/>
</dbReference>
<dbReference type="RefSeq" id="NP_312921.2">
    <property type="nucleotide sequence ID" value="NC_002695.1"/>
</dbReference>
<dbReference type="SMR" id="Q7A964"/>
<dbReference type="STRING" id="155864.Z5524"/>
<dbReference type="GeneID" id="914977"/>
<dbReference type="KEGG" id="ece:Z5524"/>
<dbReference type="KEGG" id="ecs:ECs_4894"/>
<dbReference type="PATRIC" id="fig|386585.9.peg.5118"/>
<dbReference type="eggNOG" id="COG1309">
    <property type="taxonomic scope" value="Bacteria"/>
</dbReference>
<dbReference type="HOGENOM" id="CLU_081861_0_0_6"/>
<dbReference type="OMA" id="AYWYRKE"/>
<dbReference type="Proteomes" id="UP000000558">
    <property type="component" value="Chromosome"/>
</dbReference>
<dbReference type="Proteomes" id="UP000002519">
    <property type="component" value="Chromosome"/>
</dbReference>
<dbReference type="GO" id="GO:0005737">
    <property type="term" value="C:cytoplasm"/>
    <property type="evidence" value="ECO:0007669"/>
    <property type="project" value="UniProtKB-SubCell"/>
</dbReference>
<dbReference type="GO" id="GO:0003677">
    <property type="term" value="F:DNA binding"/>
    <property type="evidence" value="ECO:0007669"/>
    <property type="project" value="UniProtKB-KW"/>
</dbReference>
<dbReference type="GO" id="GO:0003700">
    <property type="term" value="F:DNA-binding transcription factor activity"/>
    <property type="evidence" value="ECO:0007669"/>
    <property type="project" value="UniProtKB-UniRule"/>
</dbReference>
<dbReference type="GO" id="GO:0006633">
    <property type="term" value="P:fatty acid biosynthetic process"/>
    <property type="evidence" value="ECO:0007669"/>
    <property type="project" value="UniProtKB-UniRule"/>
</dbReference>
<dbReference type="GO" id="GO:0045717">
    <property type="term" value="P:negative regulation of fatty acid biosynthetic process"/>
    <property type="evidence" value="ECO:0007669"/>
    <property type="project" value="UniProtKB-UniRule"/>
</dbReference>
<dbReference type="FunFam" id="1.10.10.60:FF:000034">
    <property type="entry name" value="HTH-type transcriptional repressor FabR"/>
    <property type="match status" value="1"/>
</dbReference>
<dbReference type="FunFam" id="1.10.357.10:FF:000001">
    <property type="entry name" value="HTH-type transcriptional repressor FabR"/>
    <property type="match status" value="1"/>
</dbReference>
<dbReference type="Gene3D" id="1.10.10.60">
    <property type="entry name" value="Homeodomain-like"/>
    <property type="match status" value="1"/>
</dbReference>
<dbReference type="Gene3D" id="1.10.357.10">
    <property type="entry name" value="Tetracycline Repressor, domain 2"/>
    <property type="match status" value="1"/>
</dbReference>
<dbReference type="HAMAP" id="MF_01190">
    <property type="entry name" value="HTH_type_FabR"/>
    <property type="match status" value="1"/>
</dbReference>
<dbReference type="InterPro" id="IPR054129">
    <property type="entry name" value="DesT_TetR_C"/>
</dbReference>
<dbReference type="InterPro" id="IPR009057">
    <property type="entry name" value="Homeodomain-like_sf"/>
</dbReference>
<dbReference type="InterPro" id="IPR001647">
    <property type="entry name" value="HTH_TetR"/>
</dbReference>
<dbReference type="InterPro" id="IPR050692">
    <property type="entry name" value="HTH_transcr_repressor_FabR"/>
</dbReference>
<dbReference type="InterPro" id="IPR023764">
    <property type="entry name" value="Tscrpt_reg_HTH_FabR"/>
</dbReference>
<dbReference type="NCBIfam" id="NF008402">
    <property type="entry name" value="PRK11202.1"/>
    <property type="match status" value="1"/>
</dbReference>
<dbReference type="PANTHER" id="PTHR47752">
    <property type="entry name" value="HTH-TYPE TRANSCRIPTIONAL REPRESSOR FABR"/>
    <property type="match status" value="1"/>
</dbReference>
<dbReference type="PANTHER" id="PTHR47752:SF1">
    <property type="entry name" value="HTH-TYPE TRANSCRIPTIONAL REPRESSOR FABR"/>
    <property type="match status" value="1"/>
</dbReference>
<dbReference type="Pfam" id="PF21943">
    <property type="entry name" value="TetR_C_46"/>
    <property type="match status" value="1"/>
</dbReference>
<dbReference type="Pfam" id="PF00440">
    <property type="entry name" value="TetR_N"/>
    <property type="match status" value="1"/>
</dbReference>
<dbReference type="SUPFAM" id="SSF46689">
    <property type="entry name" value="Homeodomain-like"/>
    <property type="match status" value="1"/>
</dbReference>
<dbReference type="PROSITE" id="PS50977">
    <property type="entry name" value="HTH_TETR_2"/>
    <property type="match status" value="1"/>
</dbReference>
<accession>Q7A964</accession>
<accession>Q8X725</accession>
<sequence length="215" mass="24404">MGVRAQQKEKTRRSLVEAAFSQLSAERSFASLSLREVAREAGIAPTSFYRHFRDVDELGLTMVDESGLMLRQLMRQARQRIAKGGSVIRTSVSTFMEFIGNNPNAFRLLLRERSGTSAAFRAAVAREIQHFIAELADYLELENHMPRAFTEAQAEAMVTIVFSAGAEALDVGVEQRRQLEERLVLQLRMISKGAYYWYRREQEKTAIIPGNVKDE</sequence>
<organism>
    <name type="scientific">Escherichia coli O157:H7</name>
    <dbReference type="NCBI Taxonomy" id="83334"/>
    <lineage>
        <taxon>Bacteria</taxon>
        <taxon>Pseudomonadati</taxon>
        <taxon>Pseudomonadota</taxon>
        <taxon>Gammaproteobacteria</taxon>
        <taxon>Enterobacterales</taxon>
        <taxon>Enterobacteriaceae</taxon>
        <taxon>Escherichia</taxon>
    </lineage>
</organism>
<gene>
    <name evidence="1" type="primary">fabR</name>
    <name type="ordered locus">Z5524</name>
    <name type="ordered locus">ECs4894</name>
</gene>
<keyword id="KW-0963">Cytoplasm</keyword>
<keyword id="KW-0238">DNA-binding</keyword>
<keyword id="KW-0275">Fatty acid biosynthesis</keyword>
<keyword id="KW-0276">Fatty acid metabolism</keyword>
<keyword id="KW-0444">Lipid biosynthesis</keyword>
<keyword id="KW-0443">Lipid metabolism</keyword>
<keyword id="KW-1185">Reference proteome</keyword>
<keyword id="KW-0678">Repressor</keyword>
<keyword id="KW-0804">Transcription</keyword>
<keyword id="KW-0805">Transcription regulation</keyword>
<reference key="1">
    <citation type="journal article" date="2001" name="Nature">
        <title>Genome sequence of enterohaemorrhagic Escherichia coli O157:H7.</title>
        <authorList>
            <person name="Perna N.T."/>
            <person name="Plunkett G. III"/>
            <person name="Burland V."/>
            <person name="Mau B."/>
            <person name="Glasner J.D."/>
            <person name="Rose D.J."/>
            <person name="Mayhew G.F."/>
            <person name="Evans P.S."/>
            <person name="Gregor J."/>
            <person name="Kirkpatrick H.A."/>
            <person name="Posfai G."/>
            <person name="Hackett J."/>
            <person name="Klink S."/>
            <person name="Boutin A."/>
            <person name="Shao Y."/>
            <person name="Miller L."/>
            <person name="Grotbeck E.J."/>
            <person name="Davis N.W."/>
            <person name="Lim A."/>
            <person name="Dimalanta E.T."/>
            <person name="Potamousis K."/>
            <person name="Apodaca J."/>
            <person name="Anantharaman T.S."/>
            <person name="Lin J."/>
            <person name="Yen G."/>
            <person name="Schwartz D.C."/>
            <person name="Welch R.A."/>
            <person name="Blattner F.R."/>
        </authorList>
    </citation>
    <scope>NUCLEOTIDE SEQUENCE [LARGE SCALE GENOMIC DNA]</scope>
    <source>
        <strain>O157:H7 / EDL933 / ATCC 700927 / EHEC</strain>
    </source>
</reference>
<reference key="2">
    <citation type="journal article" date="2001" name="DNA Res.">
        <title>Complete genome sequence of enterohemorrhagic Escherichia coli O157:H7 and genomic comparison with a laboratory strain K-12.</title>
        <authorList>
            <person name="Hayashi T."/>
            <person name="Makino K."/>
            <person name="Ohnishi M."/>
            <person name="Kurokawa K."/>
            <person name="Ishii K."/>
            <person name="Yokoyama K."/>
            <person name="Han C.-G."/>
            <person name="Ohtsubo E."/>
            <person name="Nakayama K."/>
            <person name="Murata T."/>
            <person name="Tanaka M."/>
            <person name="Tobe T."/>
            <person name="Iida T."/>
            <person name="Takami H."/>
            <person name="Honda T."/>
            <person name="Sasakawa C."/>
            <person name="Ogasawara N."/>
            <person name="Yasunaga T."/>
            <person name="Kuhara S."/>
            <person name="Shiba T."/>
            <person name="Hattori M."/>
            <person name="Shinagawa H."/>
        </authorList>
    </citation>
    <scope>NUCLEOTIDE SEQUENCE [LARGE SCALE GENOMIC DNA]</scope>
    <source>
        <strain>O157:H7 / Sakai / RIMD 0509952 / EHEC</strain>
    </source>
</reference>
<evidence type="ECO:0000255" key="1">
    <source>
        <dbReference type="HAMAP-Rule" id="MF_01190"/>
    </source>
</evidence>
<evidence type="ECO:0000305" key="2"/>
<comment type="function">
    <text evidence="1">Represses the transcription of fabB, involved in unsaturated fatty acid (UFA) biosynthesis. By controlling UFA production, FabR directly influences the physical properties of the membrane bilayer.</text>
</comment>
<comment type="subunit">
    <text evidence="1">Homodimer.</text>
</comment>
<comment type="subcellular location">
    <subcellularLocation>
        <location evidence="1">Cytoplasm</location>
    </subcellularLocation>
</comment>
<comment type="sequence caution" evidence="2">
    <conflict type="erroneous initiation">
        <sequence resource="EMBL-CDS" id="AAG59167"/>
    </conflict>
</comment>
<comment type="sequence caution" evidence="2">
    <conflict type="erroneous initiation">
        <sequence resource="EMBL-CDS" id="BAB38317"/>
    </conflict>
</comment>
<proteinExistence type="inferred from homology"/>
<feature type="chain" id="PRO_0000293566" description="HTH-type transcriptional repressor FabR">
    <location>
        <begin position="1"/>
        <end position="215"/>
    </location>
</feature>
<feature type="domain" description="HTH tetR-type" evidence="1">
    <location>
        <begin position="10"/>
        <end position="70"/>
    </location>
</feature>
<feature type="DNA-binding region" description="H-T-H motif" evidence="1">
    <location>
        <begin position="33"/>
        <end position="52"/>
    </location>
</feature>
<protein>
    <recommendedName>
        <fullName evidence="1">HTH-type transcriptional repressor FabR</fullName>
    </recommendedName>
</protein>
<name>FABR_ECO57</name>